<reference key="1">
    <citation type="journal article" date="1994" name="Biochim. Biophys. Acta">
        <title>Cloning and sequencing of cDNAs for rabbit preproacrosin and a novel preproacrosin-related cDNA.</title>
        <authorList>
            <person name="Richardson R.T."/>
            <person name="O'Rand M.G."/>
        </authorList>
    </citation>
    <scope>NUCLEOTIDE SEQUENCE [MRNA]</scope>
    <source>
        <strain>New Zealand white</strain>
        <tissue>Testis</tissue>
    </source>
</reference>
<gene>
    <name type="primary">ACR</name>
</gene>
<evidence type="ECO:0000250" key="1"/>
<evidence type="ECO:0000255" key="2"/>
<evidence type="ECO:0000255" key="3">
    <source>
        <dbReference type="PROSITE-ProRule" id="PRU00274"/>
    </source>
</evidence>
<evidence type="ECO:0000256" key="4">
    <source>
        <dbReference type="SAM" id="MobiDB-lite"/>
    </source>
</evidence>
<organism>
    <name type="scientific">Oryctolagus cuniculus</name>
    <name type="common">Rabbit</name>
    <dbReference type="NCBI Taxonomy" id="9986"/>
    <lineage>
        <taxon>Eukaryota</taxon>
        <taxon>Metazoa</taxon>
        <taxon>Chordata</taxon>
        <taxon>Craniata</taxon>
        <taxon>Vertebrata</taxon>
        <taxon>Euteleostomi</taxon>
        <taxon>Mammalia</taxon>
        <taxon>Eutheria</taxon>
        <taxon>Euarchontoglires</taxon>
        <taxon>Glires</taxon>
        <taxon>Lagomorpha</taxon>
        <taxon>Leporidae</taxon>
        <taxon>Oryctolagus</taxon>
    </lineage>
</organism>
<keyword id="KW-1015">Disulfide bond</keyword>
<keyword id="KW-0325">Glycoprotein</keyword>
<keyword id="KW-0378">Hydrolase</keyword>
<keyword id="KW-0645">Protease</keyword>
<keyword id="KW-1185">Reference proteome</keyword>
<keyword id="KW-0720">Serine protease</keyword>
<keyword id="KW-0732">Signal</keyword>
<keyword id="KW-0865">Zymogen</keyword>
<feature type="signal peptide" evidence="1">
    <location>
        <begin position="1"/>
        <end position="16"/>
    </location>
</feature>
<feature type="chain" id="PRO_0000027530" description="Acrosin">
    <location>
        <begin position="17"/>
        <end position="431"/>
    </location>
</feature>
<feature type="chain" id="PRO_0000027531" description="Acrosin light chain" evidence="1">
    <location>
        <begin position="17"/>
        <end position="39"/>
    </location>
</feature>
<feature type="chain" id="PRO_0000027532" description="Acrosin heavy chain" evidence="1">
    <location>
        <begin position="40"/>
        <end position="350"/>
    </location>
</feature>
<feature type="propeptide" id="PRO_0000027533" description="Pro-rich" evidence="1">
    <location>
        <begin position="351"/>
        <end position="431"/>
    </location>
</feature>
<feature type="domain" description="Peptidase S1" evidence="3">
    <location>
        <begin position="40"/>
        <end position="288"/>
    </location>
</feature>
<feature type="region of interest" description="Disordered" evidence="4">
    <location>
        <begin position="295"/>
        <end position="385"/>
    </location>
</feature>
<feature type="compositionally biased region" description="Basic residues" evidence="4">
    <location>
        <begin position="331"/>
        <end position="341"/>
    </location>
</feature>
<feature type="compositionally biased region" description="Pro residues" evidence="4">
    <location>
        <begin position="342"/>
        <end position="381"/>
    </location>
</feature>
<feature type="active site" description="Charge relay system" evidence="1">
    <location>
        <position position="86"/>
    </location>
</feature>
<feature type="active site" description="Charge relay system" evidence="1">
    <location>
        <position position="140"/>
    </location>
</feature>
<feature type="active site" description="Charge relay system" evidence="1">
    <location>
        <position position="238"/>
    </location>
</feature>
<feature type="glycosylation site" description="N-linked (GlcNAc...) asparagine" evidence="2">
    <location>
        <position position="19"/>
    </location>
</feature>
<feature type="glycosylation site" description="N-linked (GlcNAc...) asparagine" evidence="2">
    <location>
        <position position="208"/>
    </location>
</feature>
<feature type="disulfide bond" description="Interchain (between light and heavy chains)" evidence="3">
    <location>
        <begin position="22"/>
        <end position="152"/>
    </location>
</feature>
<feature type="disulfide bond" description="Interchain (between light and heavy chains)" evidence="3">
    <location>
        <begin position="26"/>
        <end position="160"/>
    </location>
</feature>
<feature type="disulfide bond" evidence="3">
    <location>
        <begin position="71"/>
        <end position="87"/>
    </location>
</feature>
<feature type="disulfide bond" evidence="3">
    <location>
        <begin position="175"/>
        <end position="244"/>
    </location>
</feature>
<feature type="disulfide bond" evidence="3">
    <location>
        <begin position="207"/>
        <end position="223"/>
    </location>
</feature>
<feature type="disulfide bond" evidence="3">
    <location>
        <begin position="234"/>
        <end position="264"/>
    </location>
</feature>
<sequence>MLPTAVLLVLVVSVVAKDNATCDGPCGLRFRQNPQGGFRVVGGQAAQQGAWPWMVSLQIFTPRNNRRYHACGGVLLNAHWVLTAAHCFNNKQKVYEWRMVFGAQEIEYGTDKPVRPPLQERYVEKVVTHDQYNYMTEGNDIALLKITPPVPCGPFIGPGCLPNSKAGPPKAAQTCYVAGWGYVKENAPRPSPTLMEARVDLINLELCNSTQWYNGRITASNLCAGYPSGKIDTCQGDSGGPLMCRENQGEPFVVQGITSWGVGCARAKRPGIYTATWPFLDWIASRIGSNALRMIQPATPTPPTTRSPGVHQPPSAHPPWYFQHASGPPHPHPHPHPHPHPRPPQPPAAQAPPPPPPPPPPPPPPPPPPPPPPPPPPPASTKPPQALSFAKRLQQLVEVLKGGSTFSGAKRVDTAAAAAEATEIPEVTLAS</sequence>
<dbReference type="EC" id="3.4.21.10"/>
<dbReference type="EMBL" id="U05204">
    <property type="protein sequence ID" value="AAA61630.1"/>
    <property type="molecule type" value="mRNA"/>
</dbReference>
<dbReference type="PIR" id="S47538">
    <property type="entry name" value="S47538"/>
</dbReference>
<dbReference type="RefSeq" id="NP_001075805.1">
    <property type="nucleotide sequence ID" value="NM_001082336.1"/>
</dbReference>
<dbReference type="SMR" id="P48038"/>
<dbReference type="FunCoup" id="P48038">
    <property type="interactions" value="33"/>
</dbReference>
<dbReference type="STRING" id="9986.ENSOCUP00000018308"/>
<dbReference type="MEROPS" id="S01.223"/>
<dbReference type="GlyCosmos" id="P48038">
    <property type="glycosylation" value="2 sites, No reported glycans"/>
</dbReference>
<dbReference type="GeneID" id="100009184"/>
<dbReference type="KEGG" id="ocu:100009184"/>
<dbReference type="CTD" id="49"/>
<dbReference type="InParanoid" id="P48038"/>
<dbReference type="OrthoDB" id="6339452at2759"/>
<dbReference type="BRENDA" id="3.4.21.10">
    <property type="organism ID" value="1749"/>
</dbReference>
<dbReference type="Proteomes" id="UP000001811">
    <property type="component" value="Unplaced"/>
</dbReference>
<dbReference type="GO" id="GO:0001669">
    <property type="term" value="C:acrosomal vesicle"/>
    <property type="evidence" value="ECO:0007669"/>
    <property type="project" value="InterPro"/>
</dbReference>
<dbReference type="GO" id="GO:0004040">
    <property type="term" value="F:amidase activity"/>
    <property type="evidence" value="ECO:0000250"/>
    <property type="project" value="UniProtKB"/>
</dbReference>
<dbReference type="GO" id="GO:0005537">
    <property type="term" value="F:D-mannose binding"/>
    <property type="evidence" value="ECO:0000250"/>
    <property type="project" value="UniProtKB"/>
</dbReference>
<dbReference type="GO" id="GO:0042806">
    <property type="term" value="F:fucose binding"/>
    <property type="evidence" value="ECO:0000250"/>
    <property type="project" value="UniProtKB"/>
</dbReference>
<dbReference type="GO" id="GO:0004252">
    <property type="term" value="F:serine-type endopeptidase activity"/>
    <property type="evidence" value="ECO:0000250"/>
    <property type="project" value="UniProtKB"/>
</dbReference>
<dbReference type="GO" id="GO:0008236">
    <property type="term" value="F:serine-type peptidase activity"/>
    <property type="evidence" value="ECO:0000250"/>
    <property type="project" value="UniProtKB"/>
</dbReference>
<dbReference type="GO" id="GO:0007340">
    <property type="term" value="P:acrosome reaction"/>
    <property type="evidence" value="ECO:0000250"/>
    <property type="project" value="UniProtKB"/>
</dbReference>
<dbReference type="GO" id="GO:0007190">
    <property type="term" value="P:activation of adenylate cyclase activity"/>
    <property type="evidence" value="ECO:0000250"/>
    <property type="project" value="UniProtKB"/>
</dbReference>
<dbReference type="GO" id="GO:0006508">
    <property type="term" value="P:proteolysis"/>
    <property type="evidence" value="ECO:0007669"/>
    <property type="project" value="UniProtKB-KW"/>
</dbReference>
<dbReference type="GO" id="GO:0007338">
    <property type="term" value="P:single fertilization"/>
    <property type="evidence" value="ECO:0000250"/>
    <property type="project" value="UniProtKB"/>
</dbReference>
<dbReference type="CDD" id="cd00190">
    <property type="entry name" value="Tryp_SPc"/>
    <property type="match status" value="1"/>
</dbReference>
<dbReference type="FunFam" id="2.40.10.10:FF:000060">
    <property type="entry name" value="Acrosin"/>
    <property type="match status" value="1"/>
</dbReference>
<dbReference type="FunFam" id="2.40.10.10:FF:000002">
    <property type="entry name" value="Transmembrane protease serine"/>
    <property type="match status" value="1"/>
</dbReference>
<dbReference type="Gene3D" id="2.40.10.10">
    <property type="entry name" value="Trypsin-like serine proteases"/>
    <property type="match status" value="2"/>
</dbReference>
<dbReference type="InterPro" id="IPR012267">
    <property type="entry name" value="Pept_S1A_acrosin"/>
</dbReference>
<dbReference type="InterPro" id="IPR009003">
    <property type="entry name" value="Peptidase_S1_PA"/>
</dbReference>
<dbReference type="InterPro" id="IPR043504">
    <property type="entry name" value="Peptidase_S1_PA_chymotrypsin"/>
</dbReference>
<dbReference type="InterPro" id="IPR001314">
    <property type="entry name" value="Peptidase_S1A"/>
</dbReference>
<dbReference type="InterPro" id="IPR001254">
    <property type="entry name" value="Trypsin_dom"/>
</dbReference>
<dbReference type="InterPro" id="IPR018114">
    <property type="entry name" value="TRYPSIN_HIS"/>
</dbReference>
<dbReference type="InterPro" id="IPR033116">
    <property type="entry name" value="TRYPSIN_SER"/>
</dbReference>
<dbReference type="PANTHER" id="PTHR24252:SF8">
    <property type="entry name" value="ACROSIN"/>
    <property type="match status" value="1"/>
</dbReference>
<dbReference type="PANTHER" id="PTHR24252">
    <property type="entry name" value="ACROSIN-RELATED"/>
    <property type="match status" value="1"/>
</dbReference>
<dbReference type="Pfam" id="PF00089">
    <property type="entry name" value="Trypsin"/>
    <property type="match status" value="1"/>
</dbReference>
<dbReference type="PIRSF" id="PIRSF001141">
    <property type="entry name" value="Acrosin"/>
    <property type="match status" value="1"/>
</dbReference>
<dbReference type="PRINTS" id="PR00722">
    <property type="entry name" value="CHYMOTRYPSIN"/>
</dbReference>
<dbReference type="SMART" id="SM00020">
    <property type="entry name" value="Tryp_SPc"/>
    <property type="match status" value="1"/>
</dbReference>
<dbReference type="SUPFAM" id="SSF50494">
    <property type="entry name" value="Trypsin-like serine proteases"/>
    <property type="match status" value="1"/>
</dbReference>
<dbReference type="PROSITE" id="PS50240">
    <property type="entry name" value="TRYPSIN_DOM"/>
    <property type="match status" value="1"/>
</dbReference>
<dbReference type="PROSITE" id="PS00134">
    <property type="entry name" value="TRYPSIN_HIS"/>
    <property type="match status" value="1"/>
</dbReference>
<dbReference type="PROSITE" id="PS00135">
    <property type="entry name" value="TRYPSIN_SER"/>
    <property type="match status" value="1"/>
</dbReference>
<proteinExistence type="evidence at transcript level"/>
<comment type="function">
    <text>Acrosin is the major protease of mammalian spermatozoa. It is a serine protease of trypsin-like cleavage specificity, it is synthesized in a zymogen form, proacrosin and stored in the acrosome.</text>
</comment>
<comment type="catalytic activity">
    <reaction>
        <text>Preferential cleavage: Arg-|-Xaa, Lys-|-Xaa.</text>
        <dbReference type="EC" id="3.4.21.10"/>
    </reaction>
</comment>
<comment type="activity regulation">
    <text evidence="1">Inhibited by SERPINA5.</text>
</comment>
<comment type="subunit">
    <text evidence="1">Heavy chain (catalytic) and a light chain linked by two disulfide bonds. Forms a heterodimer with SERPINA5 (By similarity).</text>
</comment>
<comment type="similarity">
    <text evidence="3">Belongs to the peptidase S1 family.</text>
</comment>
<accession>P48038</accession>
<protein>
    <recommendedName>
        <fullName>Acrosin</fullName>
        <ecNumber>3.4.21.10</ecNumber>
    </recommendedName>
    <component>
        <recommendedName>
            <fullName>Acrosin light chain</fullName>
        </recommendedName>
    </component>
    <component>
        <recommendedName>
            <fullName>Acrosin heavy chain</fullName>
        </recommendedName>
    </component>
</protein>
<name>ACRO_RABIT</name>